<reference key="1">
    <citation type="journal article" date="2010" name="Genome Biol.">
        <title>Structure and dynamics of the pan-genome of Streptococcus pneumoniae and closely related species.</title>
        <authorList>
            <person name="Donati C."/>
            <person name="Hiller N.L."/>
            <person name="Tettelin H."/>
            <person name="Muzzi A."/>
            <person name="Croucher N.J."/>
            <person name="Angiuoli S.V."/>
            <person name="Oggioni M."/>
            <person name="Dunning Hotopp J.C."/>
            <person name="Hu F.Z."/>
            <person name="Riley D.R."/>
            <person name="Covacci A."/>
            <person name="Mitchell T.J."/>
            <person name="Bentley S.D."/>
            <person name="Kilian M."/>
            <person name="Ehrlich G.D."/>
            <person name="Rappuoli R."/>
            <person name="Moxon E.R."/>
            <person name="Masignani V."/>
        </authorList>
    </citation>
    <scope>NUCLEOTIDE SEQUENCE [LARGE SCALE GENOMIC DNA]</scope>
    <source>
        <strain>70585</strain>
    </source>
</reference>
<evidence type="ECO:0000255" key="1">
    <source>
        <dbReference type="HAMAP-Rule" id="MF_00358"/>
    </source>
</evidence>
<evidence type="ECO:0000256" key="2">
    <source>
        <dbReference type="SAM" id="MobiDB-lite"/>
    </source>
</evidence>
<evidence type="ECO:0000305" key="3"/>
<name>RS21_STRP7</name>
<accession>C1C813</accession>
<proteinExistence type="inferred from homology"/>
<gene>
    <name evidence="1" type="primary">rpsU</name>
    <name type="ordered locus">SP70585_1453</name>
</gene>
<feature type="chain" id="PRO_1000133489" description="Small ribosomal subunit protein bS21">
    <location>
        <begin position="1"/>
        <end position="58"/>
    </location>
</feature>
<feature type="region of interest" description="Disordered" evidence="2">
    <location>
        <begin position="39"/>
        <end position="58"/>
    </location>
</feature>
<feature type="compositionally biased region" description="Basic residues" evidence="2">
    <location>
        <begin position="43"/>
        <end position="58"/>
    </location>
</feature>
<comment type="similarity">
    <text evidence="1">Belongs to the bacterial ribosomal protein bS21 family.</text>
</comment>
<sequence>MSKTVVRKNESLDDALRRFKRAVTKAGTLQETRKREFYEKPSVKRKRKSEVARKRKKF</sequence>
<dbReference type="EMBL" id="CP000918">
    <property type="protein sequence ID" value="ACO17956.1"/>
    <property type="molecule type" value="Genomic_DNA"/>
</dbReference>
<dbReference type="RefSeq" id="WP_000048055.1">
    <property type="nucleotide sequence ID" value="NC_012468.1"/>
</dbReference>
<dbReference type="SMR" id="C1C813"/>
<dbReference type="GeneID" id="45653328"/>
<dbReference type="KEGG" id="snm:SP70585_1453"/>
<dbReference type="HOGENOM" id="CLU_159258_3_2_9"/>
<dbReference type="Proteomes" id="UP000002211">
    <property type="component" value="Chromosome"/>
</dbReference>
<dbReference type="GO" id="GO:1990904">
    <property type="term" value="C:ribonucleoprotein complex"/>
    <property type="evidence" value="ECO:0007669"/>
    <property type="project" value="UniProtKB-KW"/>
</dbReference>
<dbReference type="GO" id="GO:0005840">
    <property type="term" value="C:ribosome"/>
    <property type="evidence" value="ECO:0007669"/>
    <property type="project" value="UniProtKB-KW"/>
</dbReference>
<dbReference type="GO" id="GO:0003735">
    <property type="term" value="F:structural constituent of ribosome"/>
    <property type="evidence" value="ECO:0007669"/>
    <property type="project" value="InterPro"/>
</dbReference>
<dbReference type="GO" id="GO:0006412">
    <property type="term" value="P:translation"/>
    <property type="evidence" value="ECO:0007669"/>
    <property type="project" value="UniProtKB-UniRule"/>
</dbReference>
<dbReference type="Gene3D" id="1.20.5.1150">
    <property type="entry name" value="Ribosomal protein S8"/>
    <property type="match status" value="1"/>
</dbReference>
<dbReference type="HAMAP" id="MF_00358">
    <property type="entry name" value="Ribosomal_bS21"/>
    <property type="match status" value="1"/>
</dbReference>
<dbReference type="InterPro" id="IPR001911">
    <property type="entry name" value="Ribosomal_bS21"/>
</dbReference>
<dbReference type="InterPro" id="IPR018278">
    <property type="entry name" value="Ribosomal_bS21_CS"/>
</dbReference>
<dbReference type="InterPro" id="IPR038380">
    <property type="entry name" value="Ribosomal_bS21_sf"/>
</dbReference>
<dbReference type="NCBIfam" id="TIGR00030">
    <property type="entry name" value="S21p"/>
    <property type="match status" value="1"/>
</dbReference>
<dbReference type="PANTHER" id="PTHR21109">
    <property type="entry name" value="MITOCHONDRIAL 28S RIBOSOMAL PROTEIN S21"/>
    <property type="match status" value="1"/>
</dbReference>
<dbReference type="PANTHER" id="PTHR21109:SF22">
    <property type="entry name" value="SMALL RIBOSOMAL SUBUNIT PROTEIN BS21"/>
    <property type="match status" value="1"/>
</dbReference>
<dbReference type="Pfam" id="PF01165">
    <property type="entry name" value="Ribosomal_S21"/>
    <property type="match status" value="1"/>
</dbReference>
<dbReference type="PRINTS" id="PR00976">
    <property type="entry name" value="RIBOSOMALS21"/>
</dbReference>
<dbReference type="PROSITE" id="PS01181">
    <property type="entry name" value="RIBOSOMAL_S21"/>
    <property type="match status" value="1"/>
</dbReference>
<organism>
    <name type="scientific">Streptococcus pneumoniae (strain 70585)</name>
    <dbReference type="NCBI Taxonomy" id="488221"/>
    <lineage>
        <taxon>Bacteria</taxon>
        <taxon>Bacillati</taxon>
        <taxon>Bacillota</taxon>
        <taxon>Bacilli</taxon>
        <taxon>Lactobacillales</taxon>
        <taxon>Streptococcaceae</taxon>
        <taxon>Streptococcus</taxon>
    </lineage>
</organism>
<keyword id="KW-0687">Ribonucleoprotein</keyword>
<keyword id="KW-0689">Ribosomal protein</keyword>
<protein>
    <recommendedName>
        <fullName evidence="1">Small ribosomal subunit protein bS21</fullName>
    </recommendedName>
    <alternativeName>
        <fullName evidence="3">30S ribosomal protein S21</fullName>
    </alternativeName>
</protein>